<comment type="function">
    <text evidence="1">Prevents the cell division inhibition by proteins MinC and MinD at internal division sites while permitting inhibition at polar sites. This ensures cell division at the proper site by restricting the formation of a division septum at the midpoint of the long axis of the cell.</text>
</comment>
<comment type="similarity">
    <text evidence="1">Belongs to the MinE family.</text>
</comment>
<evidence type="ECO:0000255" key="1">
    <source>
        <dbReference type="HAMAP-Rule" id="MF_00262"/>
    </source>
</evidence>
<protein>
    <recommendedName>
        <fullName evidence="1">Cell division topological specificity factor</fullName>
    </recommendedName>
</protein>
<name>MINE_SHIB3</name>
<reference key="1">
    <citation type="submission" date="2008-05" db="EMBL/GenBank/DDBJ databases">
        <title>Complete sequence of Shigella boydii serotype 18 strain BS512.</title>
        <authorList>
            <person name="Rasko D.A."/>
            <person name="Rosovitz M."/>
            <person name="Maurelli A.T."/>
            <person name="Myers G."/>
            <person name="Seshadri R."/>
            <person name="Cer R."/>
            <person name="Jiang L."/>
            <person name="Ravel J."/>
            <person name="Sebastian Y."/>
        </authorList>
    </citation>
    <scope>NUCLEOTIDE SEQUENCE [LARGE SCALE GENOMIC DNA]</scope>
    <source>
        <strain>CDC 3083-94 / BS512</strain>
    </source>
</reference>
<accession>B2TZ99</accession>
<keyword id="KW-0131">Cell cycle</keyword>
<keyword id="KW-0132">Cell division</keyword>
<keyword id="KW-1185">Reference proteome</keyword>
<gene>
    <name evidence="1" type="primary">minE</name>
    <name type="ordered locus">SbBS512_E1327</name>
</gene>
<sequence>MALLDFFLSRKKNTANIAKERLQIIVAERRRSDAEPHYLPQLRKDILEVICKYVQIDPEMVTVQLEQKDGDISILELNVTLPEAEELK</sequence>
<proteinExistence type="inferred from homology"/>
<organism>
    <name type="scientific">Shigella boydii serotype 18 (strain CDC 3083-94 / BS512)</name>
    <dbReference type="NCBI Taxonomy" id="344609"/>
    <lineage>
        <taxon>Bacteria</taxon>
        <taxon>Pseudomonadati</taxon>
        <taxon>Pseudomonadota</taxon>
        <taxon>Gammaproteobacteria</taxon>
        <taxon>Enterobacterales</taxon>
        <taxon>Enterobacteriaceae</taxon>
        <taxon>Shigella</taxon>
    </lineage>
</organism>
<feature type="chain" id="PRO_1000114246" description="Cell division topological specificity factor">
    <location>
        <begin position="1"/>
        <end position="88"/>
    </location>
</feature>
<dbReference type="EMBL" id="CP001063">
    <property type="protein sequence ID" value="ACD07284.1"/>
    <property type="molecule type" value="Genomic_DNA"/>
</dbReference>
<dbReference type="RefSeq" id="WP_001185665.1">
    <property type="nucleotide sequence ID" value="NC_010658.1"/>
</dbReference>
<dbReference type="SMR" id="B2TZ99"/>
<dbReference type="STRING" id="344609.SbBS512_E1327"/>
<dbReference type="GeneID" id="93776260"/>
<dbReference type="KEGG" id="sbc:SbBS512_E1327"/>
<dbReference type="HOGENOM" id="CLU_137929_2_2_6"/>
<dbReference type="Proteomes" id="UP000001030">
    <property type="component" value="Chromosome"/>
</dbReference>
<dbReference type="GO" id="GO:0051301">
    <property type="term" value="P:cell division"/>
    <property type="evidence" value="ECO:0007669"/>
    <property type="project" value="UniProtKB-KW"/>
</dbReference>
<dbReference type="GO" id="GO:0032955">
    <property type="term" value="P:regulation of division septum assembly"/>
    <property type="evidence" value="ECO:0007669"/>
    <property type="project" value="InterPro"/>
</dbReference>
<dbReference type="FunFam" id="3.30.1070.10:FF:000001">
    <property type="entry name" value="Cell division topological specificity factor"/>
    <property type="match status" value="1"/>
</dbReference>
<dbReference type="Gene3D" id="3.30.1070.10">
    <property type="entry name" value="Cell division topological specificity factor MinE"/>
    <property type="match status" value="1"/>
</dbReference>
<dbReference type="HAMAP" id="MF_00262">
    <property type="entry name" value="MinE"/>
    <property type="match status" value="1"/>
</dbReference>
<dbReference type="InterPro" id="IPR005527">
    <property type="entry name" value="MinE"/>
</dbReference>
<dbReference type="InterPro" id="IPR036707">
    <property type="entry name" value="MinE_sf"/>
</dbReference>
<dbReference type="NCBIfam" id="TIGR01215">
    <property type="entry name" value="minE"/>
    <property type="match status" value="1"/>
</dbReference>
<dbReference type="NCBIfam" id="NF001422">
    <property type="entry name" value="PRK00296.1"/>
    <property type="match status" value="1"/>
</dbReference>
<dbReference type="Pfam" id="PF03776">
    <property type="entry name" value="MinE"/>
    <property type="match status" value="1"/>
</dbReference>
<dbReference type="SUPFAM" id="SSF55229">
    <property type="entry name" value="Cell division protein MinE topological specificity domain"/>
    <property type="match status" value="1"/>
</dbReference>